<feature type="signal peptide" evidence="1">
    <location>
        <begin position="1"/>
        <end position="18"/>
    </location>
</feature>
<feature type="propeptide" id="PRO_0000028401" evidence="1">
    <location>
        <begin position="19"/>
        <end position="24"/>
    </location>
</feature>
<feature type="chain" id="PRO_0000028402" description="Snake venom serine protease homolog">
    <location>
        <begin position="25"/>
        <end position="260"/>
    </location>
</feature>
<feature type="domain" description="Peptidase S1" evidence="3">
    <location>
        <begin position="25"/>
        <end position="251"/>
    </location>
</feature>
<feature type="glycosylation site" description="N-linked (GlcNAc...) asparagine" evidence="2">
    <location>
        <position position="123"/>
    </location>
</feature>
<feature type="glycosylation site" description="N-linked (GlcNAc...) asparagine" evidence="2">
    <location>
        <position position="124"/>
    </location>
</feature>
<feature type="glycosylation site" description="N-linked (GlcNAc...) asparagine" evidence="2">
    <location>
        <position position="253"/>
    </location>
</feature>
<feature type="disulfide bond" evidence="3">
    <location>
        <begin position="31"/>
        <end position="165"/>
    </location>
</feature>
<feature type="disulfide bond" evidence="3">
    <location>
        <begin position="52"/>
        <end position="68"/>
    </location>
</feature>
<feature type="disulfide bond" evidence="3">
    <location>
        <begin position="100"/>
        <end position="258"/>
    </location>
</feature>
<feature type="disulfide bond" evidence="3">
    <location>
        <begin position="144"/>
        <end position="212"/>
    </location>
</feature>
<feature type="disulfide bond" evidence="3">
    <location>
        <begin position="176"/>
        <end position="191"/>
    </location>
</feature>
<feature type="disulfide bond" evidence="3">
    <location>
        <begin position="202"/>
        <end position="227"/>
    </location>
</feature>
<keyword id="KW-1015">Disulfide bond</keyword>
<keyword id="KW-0325">Glycoprotein</keyword>
<keyword id="KW-1199">Hemostasis impairing toxin</keyword>
<keyword id="KW-0964">Secreted</keyword>
<keyword id="KW-0721">Serine protease homolog</keyword>
<keyword id="KW-0732">Signal</keyword>
<keyword id="KW-0800">Toxin</keyword>
<keyword id="KW-0865">Zymogen</keyword>
<comment type="function">
    <text evidence="4">Snake venom serine protease homolog that may act in the hemostasis system of the prey.</text>
</comment>
<comment type="subcellular location">
    <subcellularLocation>
        <location evidence="5">Secreted</location>
    </subcellularLocation>
</comment>
<comment type="tissue specificity">
    <text evidence="5">Expressed by the venom gland.</text>
</comment>
<comment type="similarity">
    <text evidence="3">Belongs to the peptidase S1 family. Snake venom subfamily.</text>
</comment>
<comment type="caution">
    <text evidence="4">Has lost two of the three essential catalytic residues and so probably has no enzymatic activity.</text>
</comment>
<proteinExistence type="evidence at transcript level"/>
<sequence length="260" mass="28614">MVLVRVLANLLMLQLSYAQKSSELIIGGDECNINEHRFLVALYTFRSRRFHCSGTLINEEWVLSAARCDRKNIRIQLGMHSTNVINEDVQTRVPKEKFSCLSSKTYTKWNKDIMLIRLKKPVNNSTHIAPVSLPSNPPTLGSVCRVMGWGTISATKETHPDVPLCANINILDYSVCRAAYARLPATSRTLCAGILEGGIDTCKGDPGGPLICNGQFQGIVSWGSDPCAKPHEPGSYTKVFDHLNWIQSIIAGNTTATCPP</sequence>
<protein>
    <recommendedName>
        <fullName>Snake venom serine protease homolog</fullName>
    </recommendedName>
    <alternativeName>
        <fullName evidence="6">SP1</fullName>
    </alternativeName>
    <alternativeName>
        <fullName>Venom serine proteinase-like protein</fullName>
    </alternativeName>
</protein>
<dbReference type="EMBL" id="AF292110">
    <property type="protein sequence ID" value="AAG10788.1"/>
    <property type="molecule type" value="mRNA"/>
</dbReference>
<dbReference type="SMR" id="Q9DF68"/>
<dbReference type="MEROPS" id="S01.509"/>
<dbReference type="GO" id="GO:0005576">
    <property type="term" value="C:extracellular region"/>
    <property type="evidence" value="ECO:0007669"/>
    <property type="project" value="UniProtKB-SubCell"/>
</dbReference>
<dbReference type="GO" id="GO:0030141">
    <property type="term" value="C:secretory granule"/>
    <property type="evidence" value="ECO:0007669"/>
    <property type="project" value="TreeGrafter"/>
</dbReference>
<dbReference type="GO" id="GO:0004252">
    <property type="term" value="F:serine-type endopeptidase activity"/>
    <property type="evidence" value="ECO:0007669"/>
    <property type="project" value="InterPro"/>
</dbReference>
<dbReference type="GO" id="GO:0090729">
    <property type="term" value="F:toxin activity"/>
    <property type="evidence" value="ECO:0007669"/>
    <property type="project" value="UniProtKB-KW"/>
</dbReference>
<dbReference type="GO" id="GO:0006508">
    <property type="term" value="P:proteolysis"/>
    <property type="evidence" value="ECO:0007669"/>
    <property type="project" value="InterPro"/>
</dbReference>
<dbReference type="CDD" id="cd00190">
    <property type="entry name" value="Tryp_SPc"/>
    <property type="match status" value="1"/>
</dbReference>
<dbReference type="FunFam" id="2.40.10.10:FF:000158">
    <property type="entry name" value="Thrombin-like enzyme saxthrombin"/>
    <property type="match status" value="1"/>
</dbReference>
<dbReference type="FunFam" id="2.40.10.10:FF:000153">
    <property type="entry name" value="Venom plasminogen activator TSV-PA"/>
    <property type="match status" value="1"/>
</dbReference>
<dbReference type="Gene3D" id="2.40.10.10">
    <property type="entry name" value="Trypsin-like serine proteases"/>
    <property type="match status" value="2"/>
</dbReference>
<dbReference type="InterPro" id="IPR009003">
    <property type="entry name" value="Peptidase_S1_PA"/>
</dbReference>
<dbReference type="InterPro" id="IPR043504">
    <property type="entry name" value="Peptidase_S1_PA_chymotrypsin"/>
</dbReference>
<dbReference type="InterPro" id="IPR001314">
    <property type="entry name" value="Peptidase_S1A"/>
</dbReference>
<dbReference type="InterPro" id="IPR001254">
    <property type="entry name" value="Trypsin_dom"/>
</dbReference>
<dbReference type="PANTHER" id="PTHR24271:SF47">
    <property type="entry name" value="KALLIKREIN-1"/>
    <property type="match status" value="1"/>
</dbReference>
<dbReference type="PANTHER" id="PTHR24271">
    <property type="entry name" value="KALLIKREIN-RELATED"/>
    <property type="match status" value="1"/>
</dbReference>
<dbReference type="Pfam" id="PF00089">
    <property type="entry name" value="Trypsin"/>
    <property type="match status" value="1"/>
</dbReference>
<dbReference type="PRINTS" id="PR00722">
    <property type="entry name" value="CHYMOTRYPSIN"/>
</dbReference>
<dbReference type="SMART" id="SM00020">
    <property type="entry name" value="Tryp_SPc"/>
    <property type="match status" value="1"/>
</dbReference>
<dbReference type="SUPFAM" id="SSF50494">
    <property type="entry name" value="Trypsin-like serine proteases"/>
    <property type="match status" value="1"/>
</dbReference>
<dbReference type="PROSITE" id="PS50240">
    <property type="entry name" value="TRYPSIN_DOM"/>
    <property type="match status" value="1"/>
</dbReference>
<evidence type="ECO:0000250" key="1"/>
<evidence type="ECO:0000255" key="2"/>
<evidence type="ECO:0000255" key="3">
    <source>
        <dbReference type="PROSITE-ProRule" id="PRU00274"/>
    </source>
</evidence>
<evidence type="ECO:0000305" key="4"/>
<evidence type="ECO:0000305" key="5">
    <source ref="1"/>
</evidence>
<evidence type="ECO:0000312" key="6">
    <source>
        <dbReference type="EMBL" id="AAG10788.1"/>
    </source>
</evidence>
<accession>Q9DF68</accession>
<name>VSPH1_PROJR</name>
<organism>
    <name type="scientific">Protobothrops jerdonii</name>
    <name type="common">Jerdon's pitviper</name>
    <name type="synonym">Trimeresurus jerdonii</name>
    <dbReference type="NCBI Taxonomy" id="242841"/>
    <lineage>
        <taxon>Eukaryota</taxon>
        <taxon>Metazoa</taxon>
        <taxon>Chordata</taxon>
        <taxon>Craniata</taxon>
        <taxon>Vertebrata</taxon>
        <taxon>Euteleostomi</taxon>
        <taxon>Lepidosauria</taxon>
        <taxon>Squamata</taxon>
        <taxon>Bifurcata</taxon>
        <taxon>Unidentata</taxon>
        <taxon>Episquamata</taxon>
        <taxon>Toxicofera</taxon>
        <taxon>Serpentes</taxon>
        <taxon>Colubroidea</taxon>
        <taxon>Viperidae</taxon>
        <taxon>Crotalinae</taxon>
        <taxon>Protobothrops</taxon>
    </lineage>
</organism>
<reference key="1">
    <citation type="submission" date="2000-08" db="EMBL/GenBank/DDBJ databases">
        <title>cDNA cloning of serine proteinases from the venom of Trimeresurus jerdonii.</title>
        <authorList>
            <person name="Lu Q.M."/>
            <person name="Jin Y."/>
            <person name="Wei J.F."/>
            <person name="Wang W.Y."/>
            <person name="Xiong Y.L."/>
        </authorList>
    </citation>
    <scope>NUCLEOTIDE SEQUENCE [MRNA]</scope>
    <source>
        <tissue>Venom gland</tissue>
    </source>
</reference>